<protein>
    <recommendedName>
        <fullName evidence="1">Chaperonin GroEL</fullName>
        <ecNumber evidence="1">5.6.1.7</ecNumber>
    </recommendedName>
    <alternativeName>
        <fullName evidence="1">60 kDa chaperonin</fullName>
    </alternativeName>
    <alternativeName>
        <fullName evidence="1">Chaperonin-60</fullName>
        <shortName evidence="1">Cpn60</shortName>
    </alternativeName>
</protein>
<reference key="1">
    <citation type="journal article" date="2005" name="Proc. Natl. Acad. Sci. U.S.A.">
        <title>Comparison of the complete genome sequences of Pseudomonas syringae pv. syringae B728a and pv. tomato DC3000.</title>
        <authorList>
            <person name="Feil H."/>
            <person name="Feil W.S."/>
            <person name="Chain P."/>
            <person name="Larimer F."/>
            <person name="Dibartolo G."/>
            <person name="Copeland A."/>
            <person name="Lykidis A."/>
            <person name="Trong S."/>
            <person name="Nolan M."/>
            <person name="Goltsman E."/>
            <person name="Thiel J."/>
            <person name="Malfatti S."/>
            <person name="Loper J.E."/>
            <person name="Lapidus A."/>
            <person name="Detter J.C."/>
            <person name="Land M."/>
            <person name="Richardson P.M."/>
            <person name="Kyrpides N.C."/>
            <person name="Ivanova N."/>
            <person name="Lindow S.E."/>
        </authorList>
    </citation>
    <scope>NUCLEOTIDE SEQUENCE [LARGE SCALE GENOMIC DNA]</scope>
    <source>
        <strain>B728a</strain>
    </source>
</reference>
<proteinExistence type="inferred from homology"/>
<comment type="function">
    <text evidence="1">Together with its co-chaperonin GroES, plays an essential role in assisting protein folding. The GroEL-GroES system forms a nano-cage that allows encapsulation of the non-native substrate proteins and provides a physical environment optimized to promote and accelerate protein folding.</text>
</comment>
<comment type="catalytic activity">
    <reaction evidence="1">
        <text>ATP + H2O + a folded polypeptide = ADP + phosphate + an unfolded polypeptide.</text>
        <dbReference type="EC" id="5.6.1.7"/>
    </reaction>
</comment>
<comment type="subunit">
    <text evidence="1">Forms a cylinder of 14 subunits composed of two heptameric rings stacked back-to-back. Interacts with the co-chaperonin GroES.</text>
</comment>
<comment type="subcellular location">
    <subcellularLocation>
        <location evidence="1">Cytoplasm</location>
    </subcellularLocation>
</comment>
<comment type="similarity">
    <text evidence="1">Belongs to the chaperonin (HSP60) family.</text>
</comment>
<gene>
    <name evidence="1" type="primary">groEL</name>
    <name evidence="1" type="synonym">groL</name>
    <name type="ordered locus">Psyr_4072</name>
</gene>
<feature type="chain" id="PRO_0000256953" description="Chaperonin GroEL">
    <location>
        <begin position="1"/>
        <end position="547"/>
    </location>
</feature>
<feature type="binding site" evidence="1">
    <location>
        <begin position="30"/>
        <end position="33"/>
    </location>
    <ligand>
        <name>ATP</name>
        <dbReference type="ChEBI" id="CHEBI:30616"/>
    </ligand>
</feature>
<feature type="binding site" evidence="1">
    <location>
        <position position="51"/>
    </location>
    <ligand>
        <name>ATP</name>
        <dbReference type="ChEBI" id="CHEBI:30616"/>
    </ligand>
</feature>
<feature type="binding site" evidence="1">
    <location>
        <begin position="87"/>
        <end position="91"/>
    </location>
    <ligand>
        <name>ATP</name>
        <dbReference type="ChEBI" id="CHEBI:30616"/>
    </ligand>
</feature>
<feature type="binding site" evidence="1">
    <location>
        <position position="415"/>
    </location>
    <ligand>
        <name>ATP</name>
        <dbReference type="ChEBI" id="CHEBI:30616"/>
    </ligand>
</feature>
<feature type="binding site" evidence="1">
    <location>
        <begin position="479"/>
        <end position="481"/>
    </location>
    <ligand>
        <name>ATP</name>
        <dbReference type="ChEBI" id="CHEBI:30616"/>
    </ligand>
</feature>
<feature type="binding site" evidence="1">
    <location>
        <position position="495"/>
    </location>
    <ligand>
        <name>ATP</name>
        <dbReference type="ChEBI" id="CHEBI:30616"/>
    </ligand>
</feature>
<dbReference type="EC" id="5.6.1.7" evidence="1"/>
<dbReference type="EMBL" id="CP000075">
    <property type="protein sequence ID" value="AAY39102.1"/>
    <property type="molecule type" value="Genomic_DNA"/>
</dbReference>
<dbReference type="RefSeq" id="WP_010439729.1">
    <property type="nucleotide sequence ID" value="NC_007005.1"/>
</dbReference>
<dbReference type="RefSeq" id="YP_237140.1">
    <property type="nucleotide sequence ID" value="NC_007005.1"/>
</dbReference>
<dbReference type="SMR" id="Q4ZP20"/>
<dbReference type="STRING" id="205918.Psyr_4072"/>
<dbReference type="GeneID" id="65076732"/>
<dbReference type="KEGG" id="psb:Psyr_4072"/>
<dbReference type="PATRIC" id="fig|205918.7.peg.4191"/>
<dbReference type="eggNOG" id="COG0459">
    <property type="taxonomic scope" value="Bacteria"/>
</dbReference>
<dbReference type="HOGENOM" id="CLU_016503_3_0_6"/>
<dbReference type="OrthoDB" id="9766614at2"/>
<dbReference type="Proteomes" id="UP000000426">
    <property type="component" value="Chromosome"/>
</dbReference>
<dbReference type="GO" id="GO:0005737">
    <property type="term" value="C:cytoplasm"/>
    <property type="evidence" value="ECO:0007669"/>
    <property type="project" value="UniProtKB-SubCell"/>
</dbReference>
<dbReference type="GO" id="GO:0005524">
    <property type="term" value="F:ATP binding"/>
    <property type="evidence" value="ECO:0007669"/>
    <property type="project" value="UniProtKB-UniRule"/>
</dbReference>
<dbReference type="GO" id="GO:0140662">
    <property type="term" value="F:ATP-dependent protein folding chaperone"/>
    <property type="evidence" value="ECO:0007669"/>
    <property type="project" value="InterPro"/>
</dbReference>
<dbReference type="GO" id="GO:0016853">
    <property type="term" value="F:isomerase activity"/>
    <property type="evidence" value="ECO:0007669"/>
    <property type="project" value="UniProtKB-KW"/>
</dbReference>
<dbReference type="GO" id="GO:0051082">
    <property type="term" value="F:unfolded protein binding"/>
    <property type="evidence" value="ECO:0007669"/>
    <property type="project" value="UniProtKB-UniRule"/>
</dbReference>
<dbReference type="GO" id="GO:0042026">
    <property type="term" value="P:protein refolding"/>
    <property type="evidence" value="ECO:0007669"/>
    <property type="project" value="UniProtKB-UniRule"/>
</dbReference>
<dbReference type="CDD" id="cd03344">
    <property type="entry name" value="GroEL"/>
    <property type="match status" value="1"/>
</dbReference>
<dbReference type="FunFam" id="1.10.560.10:FF:000001">
    <property type="entry name" value="60 kDa chaperonin"/>
    <property type="match status" value="1"/>
</dbReference>
<dbReference type="FunFam" id="3.50.7.10:FF:000001">
    <property type="entry name" value="60 kDa chaperonin"/>
    <property type="match status" value="1"/>
</dbReference>
<dbReference type="Gene3D" id="3.50.7.10">
    <property type="entry name" value="GroEL"/>
    <property type="match status" value="1"/>
</dbReference>
<dbReference type="Gene3D" id="1.10.560.10">
    <property type="entry name" value="GroEL-like equatorial domain"/>
    <property type="match status" value="1"/>
</dbReference>
<dbReference type="Gene3D" id="3.30.260.10">
    <property type="entry name" value="TCP-1-like chaperonin intermediate domain"/>
    <property type="match status" value="1"/>
</dbReference>
<dbReference type="HAMAP" id="MF_00600">
    <property type="entry name" value="CH60"/>
    <property type="match status" value="1"/>
</dbReference>
<dbReference type="InterPro" id="IPR018370">
    <property type="entry name" value="Chaperonin_Cpn60_CS"/>
</dbReference>
<dbReference type="InterPro" id="IPR001844">
    <property type="entry name" value="Cpn60/GroEL"/>
</dbReference>
<dbReference type="InterPro" id="IPR002423">
    <property type="entry name" value="Cpn60/GroEL/TCP-1"/>
</dbReference>
<dbReference type="InterPro" id="IPR027409">
    <property type="entry name" value="GroEL-like_apical_dom_sf"/>
</dbReference>
<dbReference type="InterPro" id="IPR027413">
    <property type="entry name" value="GROEL-like_equatorial_sf"/>
</dbReference>
<dbReference type="InterPro" id="IPR027410">
    <property type="entry name" value="TCP-1-like_intermed_sf"/>
</dbReference>
<dbReference type="NCBIfam" id="TIGR02348">
    <property type="entry name" value="GroEL"/>
    <property type="match status" value="1"/>
</dbReference>
<dbReference type="NCBIfam" id="NF000592">
    <property type="entry name" value="PRK00013.1"/>
    <property type="match status" value="1"/>
</dbReference>
<dbReference type="NCBIfam" id="NF009487">
    <property type="entry name" value="PRK12849.1"/>
    <property type="match status" value="1"/>
</dbReference>
<dbReference type="NCBIfam" id="NF009488">
    <property type="entry name" value="PRK12850.1"/>
    <property type="match status" value="1"/>
</dbReference>
<dbReference type="NCBIfam" id="NF009489">
    <property type="entry name" value="PRK12851.1"/>
    <property type="match status" value="1"/>
</dbReference>
<dbReference type="PANTHER" id="PTHR45633">
    <property type="entry name" value="60 KDA HEAT SHOCK PROTEIN, MITOCHONDRIAL"/>
    <property type="match status" value="1"/>
</dbReference>
<dbReference type="Pfam" id="PF00118">
    <property type="entry name" value="Cpn60_TCP1"/>
    <property type="match status" value="1"/>
</dbReference>
<dbReference type="PRINTS" id="PR00298">
    <property type="entry name" value="CHAPERONIN60"/>
</dbReference>
<dbReference type="SUPFAM" id="SSF52029">
    <property type="entry name" value="GroEL apical domain-like"/>
    <property type="match status" value="1"/>
</dbReference>
<dbReference type="SUPFAM" id="SSF48592">
    <property type="entry name" value="GroEL equatorial domain-like"/>
    <property type="match status" value="1"/>
</dbReference>
<dbReference type="SUPFAM" id="SSF54849">
    <property type="entry name" value="GroEL-intermediate domain like"/>
    <property type="match status" value="1"/>
</dbReference>
<dbReference type="PROSITE" id="PS00296">
    <property type="entry name" value="CHAPERONINS_CPN60"/>
    <property type="match status" value="1"/>
</dbReference>
<sequence>MAAKEVKFGDSGRKKMLAGVNVLADAVKATLGPKGRNVIIEKSFGAPLITKDGVSVAKEIELKDRFENMGAQLVKDVASRANDDAGDGTTTATVLAQAIVNEGLKAVAAGMNPMDLKRGIDKATIAIVAELKKLSKPCTDTKAIAQVGTISANSDHSIGDIIAEAMEKVTKDGVITVEEGSGLENELSVVEGMQFDRGYLSPYFINKPDTMVAELDSPLLLLVDKKISNIREMLPVLEAVAKAGRPLLIVAEDVEGEALATLVVNNMRGIVKVAAVKAPGFGDRRKAMLQDIAVLTGGTVISEEIGLSLETTTLEHLGNAKRVILNKENTTIIDGAGVKTDIDSRISQIRQQIGDTSSDYDKEKLQERLAKLSGGVAVIKVGAGSEVEMKEKKARVEDALHATRAAVEEGVVPGGGVALVRSLQAIEGLKGDNADQDVGIALLRRAVEAPLRQIVANSGDEPSVVVDKVKQGSGNYGYNAASGEYGDMIEMGILDPAKVTRSALQAASSIASLMITTEAMIADVPEDKPAGGGMPDMGGMGGMGGMM</sequence>
<evidence type="ECO:0000255" key="1">
    <source>
        <dbReference type="HAMAP-Rule" id="MF_00600"/>
    </source>
</evidence>
<organism>
    <name type="scientific">Pseudomonas syringae pv. syringae (strain B728a)</name>
    <dbReference type="NCBI Taxonomy" id="205918"/>
    <lineage>
        <taxon>Bacteria</taxon>
        <taxon>Pseudomonadati</taxon>
        <taxon>Pseudomonadota</taxon>
        <taxon>Gammaproteobacteria</taxon>
        <taxon>Pseudomonadales</taxon>
        <taxon>Pseudomonadaceae</taxon>
        <taxon>Pseudomonas</taxon>
        <taxon>Pseudomonas syringae</taxon>
    </lineage>
</organism>
<name>CH60_PSEU2</name>
<keyword id="KW-0067">ATP-binding</keyword>
<keyword id="KW-0143">Chaperone</keyword>
<keyword id="KW-0963">Cytoplasm</keyword>
<keyword id="KW-0413">Isomerase</keyword>
<keyword id="KW-0547">Nucleotide-binding</keyword>
<accession>Q4ZP20</accession>